<feature type="initiator methionine" description="Removed" evidence="1">
    <location>
        <position position="1"/>
    </location>
</feature>
<feature type="chain" id="PRO_0000203684" description="Guanine nucleotide-binding protein G(i) subunit alpha-2">
    <location>
        <begin position="2"/>
        <end position="355"/>
    </location>
</feature>
<feature type="domain" description="G-alpha" evidence="3">
    <location>
        <begin position="32"/>
        <end position="355"/>
    </location>
</feature>
<feature type="region of interest" description="G1 motif" evidence="3">
    <location>
        <begin position="35"/>
        <end position="48"/>
    </location>
</feature>
<feature type="region of interest" description="G2 motif" evidence="3">
    <location>
        <begin position="174"/>
        <end position="182"/>
    </location>
</feature>
<feature type="region of interest" description="G3 motif" evidence="3">
    <location>
        <begin position="197"/>
        <end position="206"/>
    </location>
</feature>
<feature type="region of interest" description="G4 motif" evidence="3">
    <location>
        <begin position="266"/>
        <end position="273"/>
    </location>
</feature>
<feature type="region of interest" description="G5 motif" evidence="3">
    <location>
        <begin position="325"/>
        <end position="330"/>
    </location>
</feature>
<feature type="binding site" evidence="1">
    <location>
        <begin position="40"/>
        <end position="47"/>
    </location>
    <ligand>
        <name>GTP</name>
        <dbReference type="ChEBI" id="CHEBI:37565"/>
    </ligand>
</feature>
<feature type="binding site" evidence="1">
    <location>
        <position position="47"/>
    </location>
    <ligand>
        <name>Mg(2+)</name>
        <dbReference type="ChEBI" id="CHEBI:18420"/>
    </ligand>
</feature>
<feature type="binding site" evidence="1">
    <location>
        <begin position="176"/>
        <end position="182"/>
    </location>
    <ligand>
        <name>GTP</name>
        <dbReference type="ChEBI" id="CHEBI:37565"/>
    </ligand>
</feature>
<feature type="binding site" evidence="1">
    <location>
        <position position="182"/>
    </location>
    <ligand>
        <name>Mg(2+)</name>
        <dbReference type="ChEBI" id="CHEBI:18420"/>
    </ligand>
</feature>
<feature type="binding site" evidence="1">
    <location>
        <begin position="201"/>
        <end position="205"/>
    </location>
    <ligand>
        <name>GTP</name>
        <dbReference type="ChEBI" id="CHEBI:37565"/>
    </ligand>
</feature>
<feature type="binding site" evidence="1">
    <location>
        <begin position="270"/>
        <end position="273"/>
    </location>
    <ligand>
        <name>GTP</name>
        <dbReference type="ChEBI" id="CHEBI:37565"/>
    </ligand>
</feature>
<feature type="binding site" evidence="1">
    <location>
        <position position="327"/>
    </location>
    <ligand>
        <name>GTP</name>
        <dbReference type="ChEBI" id="CHEBI:37565"/>
    </ligand>
</feature>
<feature type="lipid moiety-binding region" description="N-myristoyl glycine" evidence="2">
    <location>
        <position position="2"/>
    </location>
</feature>
<feature type="lipid moiety-binding region" description="S-palmitoyl cysteine" evidence="2">
    <location>
        <position position="3"/>
    </location>
</feature>
<proteinExistence type="evidence at transcript level"/>
<organism>
    <name type="scientific">Oryzias latipes</name>
    <name type="common">Japanese rice fish</name>
    <name type="synonym">Japanese killifish</name>
    <dbReference type="NCBI Taxonomy" id="8090"/>
    <lineage>
        <taxon>Eukaryota</taxon>
        <taxon>Metazoa</taxon>
        <taxon>Chordata</taxon>
        <taxon>Craniata</taxon>
        <taxon>Vertebrata</taxon>
        <taxon>Euteleostomi</taxon>
        <taxon>Actinopterygii</taxon>
        <taxon>Neopterygii</taxon>
        <taxon>Teleostei</taxon>
        <taxon>Neoteleostei</taxon>
        <taxon>Acanthomorphata</taxon>
        <taxon>Ovalentaria</taxon>
        <taxon>Atherinomorphae</taxon>
        <taxon>Beloniformes</taxon>
        <taxon>Adrianichthyidae</taxon>
        <taxon>Oryziinae</taxon>
        <taxon>Oryzias</taxon>
    </lineage>
</organism>
<keyword id="KW-0131">Cell cycle</keyword>
<keyword id="KW-0132">Cell division</keyword>
<keyword id="KW-1003">Cell membrane</keyword>
<keyword id="KW-0963">Cytoplasm</keyword>
<keyword id="KW-0206">Cytoskeleton</keyword>
<keyword id="KW-0342">GTP-binding</keyword>
<keyword id="KW-0449">Lipoprotein</keyword>
<keyword id="KW-0460">Magnesium</keyword>
<keyword id="KW-0472">Membrane</keyword>
<keyword id="KW-0479">Metal-binding</keyword>
<keyword id="KW-0519">Myristate</keyword>
<keyword id="KW-0547">Nucleotide-binding</keyword>
<keyword id="KW-0564">Palmitate</keyword>
<keyword id="KW-1185">Reference proteome</keyword>
<keyword id="KW-0807">Transducer</keyword>
<dbReference type="EMBL" id="AB001742">
    <property type="protein sequence ID" value="BAA20073.1"/>
    <property type="molecule type" value="mRNA"/>
</dbReference>
<dbReference type="RefSeq" id="NP_001098562.1">
    <property type="nucleotide sequence ID" value="NM_001105092.1"/>
</dbReference>
<dbReference type="RefSeq" id="XP_011472915.1">
    <property type="nucleotide sequence ID" value="XM_011474613.3"/>
</dbReference>
<dbReference type="SMR" id="O13055"/>
<dbReference type="STRING" id="8090.ENSORLP00000032440"/>
<dbReference type="Ensembl" id="ENSORLT00000001334.2">
    <property type="protein sequence ID" value="ENSORLP00000001333.2"/>
    <property type="gene ID" value="ENSORLG00000001082.2"/>
</dbReference>
<dbReference type="Ensembl" id="ENSORLT00000029245.1">
    <property type="protein sequence ID" value="ENSORLP00000032440.1"/>
    <property type="gene ID" value="ENSORLG00000001082.2"/>
</dbReference>
<dbReference type="Ensembl" id="ENSORLT00015011631.1">
    <property type="protein sequence ID" value="ENSORLP00015002033.1"/>
    <property type="gene ID" value="ENSORLG00015002725.1"/>
</dbReference>
<dbReference type="Ensembl" id="ENSORLT00020005845.1">
    <property type="protein sequence ID" value="ENSORLP00020005706.1"/>
    <property type="gene ID" value="ENSORLG00020006604.1"/>
</dbReference>
<dbReference type="Ensembl" id="ENSORLT00020005880.1">
    <property type="protein sequence ID" value="ENSORLP00020005681.1"/>
    <property type="gene ID" value="ENSORLG00020006604.1"/>
</dbReference>
<dbReference type="GeneID" id="100125814"/>
<dbReference type="KEGG" id="ola:100125814"/>
<dbReference type="CTD" id="2771"/>
<dbReference type="GeneTree" id="ENSGT00940000155125"/>
<dbReference type="HOGENOM" id="CLU_014184_6_0_1"/>
<dbReference type="InParanoid" id="O13055"/>
<dbReference type="OMA" id="GHRDKWI"/>
<dbReference type="OrthoDB" id="5817230at2759"/>
<dbReference type="Proteomes" id="UP000001038">
    <property type="component" value="Chromosome 5"/>
</dbReference>
<dbReference type="Proteomes" id="UP000265180">
    <property type="component" value="Chromosome 5"/>
</dbReference>
<dbReference type="Proteomes" id="UP000265200">
    <property type="component" value="Chromosome 5"/>
</dbReference>
<dbReference type="Bgee" id="ENSORLG00000001082">
    <property type="expression patterns" value="Expressed in pharyngeal gill and 14 other cell types or tissues"/>
</dbReference>
<dbReference type="GO" id="GO:0005813">
    <property type="term" value="C:centrosome"/>
    <property type="evidence" value="ECO:0000250"/>
    <property type="project" value="UniProtKB"/>
</dbReference>
<dbReference type="GO" id="GO:0005737">
    <property type="term" value="C:cytoplasm"/>
    <property type="evidence" value="ECO:0000250"/>
    <property type="project" value="UniProtKB"/>
</dbReference>
<dbReference type="GO" id="GO:0005834">
    <property type="term" value="C:heterotrimeric G-protein complex"/>
    <property type="evidence" value="ECO:0000318"/>
    <property type="project" value="GO_Central"/>
</dbReference>
<dbReference type="GO" id="GO:0030496">
    <property type="term" value="C:midbody"/>
    <property type="evidence" value="ECO:0000250"/>
    <property type="project" value="UniProtKB"/>
</dbReference>
<dbReference type="GO" id="GO:0005886">
    <property type="term" value="C:plasma membrane"/>
    <property type="evidence" value="ECO:0000250"/>
    <property type="project" value="UniProtKB"/>
</dbReference>
<dbReference type="GO" id="GO:0001664">
    <property type="term" value="F:G protein-coupled receptor binding"/>
    <property type="evidence" value="ECO:0000318"/>
    <property type="project" value="GO_Central"/>
</dbReference>
<dbReference type="GO" id="GO:0031683">
    <property type="term" value="F:G-protein beta/gamma-subunit complex binding"/>
    <property type="evidence" value="ECO:0000318"/>
    <property type="project" value="GO_Central"/>
</dbReference>
<dbReference type="GO" id="GO:0005525">
    <property type="term" value="F:GTP binding"/>
    <property type="evidence" value="ECO:0007669"/>
    <property type="project" value="UniProtKB-KW"/>
</dbReference>
<dbReference type="GO" id="GO:0003924">
    <property type="term" value="F:GTPase activity"/>
    <property type="evidence" value="ECO:0000318"/>
    <property type="project" value="GO_Central"/>
</dbReference>
<dbReference type="GO" id="GO:0046872">
    <property type="term" value="F:metal ion binding"/>
    <property type="evidence" value="ECO:0007669"/>
    <property type="project" value="UniProtKB-KW"/>
</dbReference>
<dbReference type="GO" id="GO:0007193">
    <property type="term" value="P:adenylate cyclase-inhibiting G protein-coupled receptor signaling pathway"/>
    <property type="evidence" value="ECO:0000318"/>
    <property type="project" value="GO_Central"/>
</dbReference>
<dbReference type="GO" id="GO:0051301">
    <property type="term" value="P:cell division"/>
    <property type="evidence" value="ECO:0000250"/>
    <property type="project" value="UniProtKB"/>
</dbReference>
<dbReference type="GO" id="GO:0001973">
    <property type="term" value="P:G protein-coupled adenosine receptor signaling pathway"/>
    <property type="evidence" value="ECO:0000318"/>
    <property type="project" value="GO_Central"/>
</dbReference>
<dbReference type="GO" id="GO:0007214">
    <property type="term" value="P:gamma-aminobutyric acid signaling pathway"/>
    <property type="evidence" value="ECO:0000318"/>
    <property type="project" value="GO_Central"/>
</dbReference>
<dbReference type="CDD" id="cd00066">
    <property type="entry name" value="G-alpha"/>
    <property type="match status" value="1"/>
</dbReference>
<dbReference type="FunFam" id="1.10.400.10:FF:000001">
    <property type="entry name" value="Guanine nucleotide-binding protein G(I) subunit alpha"/>
    <property type="match status" value="1"/>
</dbReference>
<dbReference type="FunFam" id="3.40.50.300:FF:002487">
    <property type="entry name" value="Guanine nucleotide-binding protein G(i) subunit alpha-1"/>
    <property type="match status" value="1"/>
</dbReference>
<dbReference type="FunFam" id="3.40.50.300:FF:003559">
    <property type="entry name" value="Guanine nucleotide-binding protein G(i) subunit alpha-1"/>
    <property type="match status" value="1"/>
</dbReference>
<dbReference type="Gene3D" id="1.10.400.10">
    <property type="entry name" value="GI Alpha 1, domain 2-like"/>
    <property type="match status" value="1"/>
</dbReference>
<dbReference type="Gene3D" id="3.40.50.300">
    <property type="entry name" value="P-loop containing nucleotide triphosphate hydrolases"/>
    <property type="match status" value="1"/>
</dbReference>
<dbReference type="InterPro" id="IPR001408">
    <property type="entry name" value="Gprotein_alpha_I"/>
</dbReference>
<dbReference type="InterPro" id="IPR001019">
    <property type="entry name" value="Gprotein_alpha_su"/>
</dbReference>
<dbReference type="InterPro" id="IPR011025">
    <property type="entry name" value="GproteinA_insert"/>
</dbReference>
<dbReference type="InterPro" id="IPR027417">
    <property type="entry name" value="P-loop_NTPase"/>
</dbReference>
<dbReference type="PANTHER" id="PTHR10218">
    <property type="entry name" value="GTP-BINDING PROTEIN ALPHA SUBUNIT"/>
    <property type="match status" value="1"/>
</dbReference>
<dbReference type="PANTHER" id="PTHR10218:SF73">
    <property type="entry name" value="GUANINE NUCLEOTIDE-BINDING PROTEIN G(I) SUBUNIT ALPHA-2"/>
    <property type="match status" value="1"/>
</dbReference>
<dbReference type="Pfam" id="PF00503">
    <property type="entry name" value="G-alpha"/>
    <property type="match status" value="1"/>
</dbReference>
<dbReference type="PRINTS" id="PR00318">
    <property type="entry name" value="GPROTEINA"/>
</dbReference>
<dbReference type="PRINTS" id="PR00441">
    <property type="entry name" value="GPROTEINAI"/>
</dbReference>
<dbReference type="SMART" id="SM00275">
    <property type="entry name" value="G_alpha"/>
    <property type="match status" value="1"/>
</dbReference>
<dbReference type="SUPFAM" id="SSF52540">
    <property type="entry name" value="P-loop containing nucleoside triphosphate hydrolases"/>
    <property type="match status" value="1"/>
</dbReference>
<dbReference type="SUPFAM" id="SSF47895">
    <property type="entry name" value="Transducin (alpha subunit), insertion domain"/>
    <property type="match status" value="1"/>
</dbReference>
<dbReference type="PROSITE" id="PS51882">
    <property type="entry name" value="G_ALPHA"/>
    <property type="match status" value="1"/>
</dbReference>
<evidence type="ECO:0000250" key="1"/>
<evidence type="ECO:0000255" key="2"/>
<evidence type="ECO:0000255" key="3">
    <source>
        <dbReference type="PROSITE-ProRule" id="PRU01230"/>
    </source>
</evidence>
<evidence type="ECO:0000305" key="4"/>
<reference key="1">
    <citation type="journal article" date="1997" name="Eur. J. Biochem.">
        <title>Inhibitory guanine-nucleotide-binding-regulatory protein alpha subunits in medaka (Oryzias latipes) oocytes -- cDNA cloning and decreased expression of proteins during oocyte maturation.</title>
        <authorList>
            <person name="Oba Y."/>
            <person name="Yoshikuni M."/>
            <person name="Tanaka M."/>
            <person name="Mita M."/>
            <person name="Nagahama Y."/>
        </authorList>
    </citation>
    <scope>NUCLEOTIDE SEQUENCE [MRNA]</scope>
    <source>
        <tissue>Ovary</tissue>
    </source>
</reference>
<accession>O13055</accession>
<sequence>MGCTVSQEDKAAADRSKMIDKNLREDGEKAAREVKLLLLGAGESGKSTIVKQMKIIHEDGYSEDECKQYRAVVYSNTVQSIMAIIKAMTILHLDYERPEREEDAKRLFKMAAEAEERGDLPEELANIIKDLWADSGIQHCLTRAREYQLNDSAAYYLKDLERISKPDYIPTQQDVLRTRVKTTGIVETHFTFKDLHFKMFDVGGQRSERKKWIHCFEGVTAIIFCVAMSAYDLVLAEDEEMNRMHESMKLFDSICNNKWFTETSIILFLNKKDLFEQKIAHSPLTICFPEYEGPNTYQEAQAYIQTKFEDLNKKKETKEIYTHFTCATDTKNVQFVFDAVTDVIIKNNLKDCGLF</sequence>
<comment type="function">
    <text evidence="1">Guanine nucleotide-binding proteins (G proteins) are involved as modulators or transducers in various transmembrane signaling systems. The G(i) proteins are involved in hormonal regulation of adenylate cyclase: they inhibit the cyclase in response to beta-adrenergic stimuli. May play a role in cell division (By similarity).</text>
</comment>
<comment type="subunit">
    <text>G proteins are composed of 3 units; alpha, beta and gamma. The alpha chain contains the guanine nucleotide binding site.</text>
</comment>
<comment type="subcellular location">
    <subcellularLocation>
        <location evidence="1">Cytoplasm</location>
    </subcellularLocation>
    <subcellularLocation>
        <location evidence="1">Cytoplasm</location>
        <location evidence="1">Cytoskeleton</location>
        <location evidence="1">Microtubule organizing center</location>
        <location evidence="1">Centrosome</location>
    </subcellularLocation>
    <subcellularLocation>
        <location evidence="1">Cell membrane</location>
    </subcellularLocation>
</comment>
<comment type="similarity">
    <text evidence="4">Belongs to the G-alpha family. G(i/o/t/z) subfamily.</text>
</comment>
<name>GNAI2_ORYLA</name>
<protein>
    <recommendedName>
        <fullName>Guanine nucleotide-binding protein G(i) subunit alpha-2</fullName>
    </recommendedName>
    <alternativeName>
        <fullName>Adenylate cyclase-inhibiting G alpha protein</fullName>
    </alternativeName>
    <alternativeName>
        <fullName>Gi alpha c</fullName>
    </alternativeName>
    <alternativeName>
        <fullName>Gi2 subunit alpha</fullName>
    </alternativeName>
</protein>
<gene>
    <name type="primary">gnai2</name>
</gene>